<sequence>MIEASKLKAGMTFEAEGKLIRVLEASHHKPGKGNTIMRMKLRDVRTGSTFDTTYRPDEKFEQAIIETVPAQYLYKMDDTAYFMNTDTYDQYEIPVANVEQELLYILENSDVKIQFYGSEVIGVTVPTTVELTVAETQPSIKGATVTGSGKPATLETGLVVNVPDFIEAGQKLIINTAEGTYVSRA</sequence>
<name>EFP_STRPB</name>
<protein>
    <recommendedName>
        <fullName evidence="1">Elongation factor P</fullName>
        <shortName evidence="1">EF-P</shortName>
    </recommendedName>
</protein>
<comment type="function">
    <text evidence="1">Involved in peptide bond synthesis. Stimulates efficient translation and peptide-bond synthesis on native or reconstituted 70S ribosomes in vitro. Probably functions indirectly by altering the affinity of the ribosome for aminoacyl-tRNA, thus increasing their reactivity as acceptors for peptidyl transferase.</text>
</comment>
<comment type="pathway">
    <text evidence="1">Protein biosynthesis; polypeptide chain elongation.</text>
</comment>
<comment type="subcellular location">
    <subcellularLocation>
        <location evidence="1">Cytoplasm</location>
    </subcellularLocation>
</comment>
<comment type="similarity">
    <text evidence="1">Belongs to the elongation factor P family.</text>
</comment>
<accession>Q1JA37</accession>
<reference key="1">
    <citation type="journal article" date="2006" name="Proc. Natl. Acad. Sci. U.S.A.">
        <title>Molecular genetic anatomy of inter- and intraserotype variation in the human bacterial pathogen group A Streptococcus.</title>
        <authorList>
            <person name="Beres S.B."/>
            <person name="Richter E.W."/>
            <person name="Nagiec M.J."/>
            <person name="Sumby P."/>
            <person name="Porcella S.F."/>
            <person name="DeLeo F.R."/>
            <person name="Musser J.M."/>
        </authorList>
    </citation>
    <scope>NUCLEOTIDE SEQUENCE [LARGE SCALE GENOMIC DNA]</scope>
    <source>
        <strain>MGAS2096</strain>
    </source>
</reference>
<organism>
    <name type="scientific">Streptococcus pyogenes serotype M12 (strain MGAS2096)</name>
    <dbReference type="NCBI Taxonomy" id="370553"/>
    <lineage>
        <taxon>Bacteria</taxon>
        <taxon>Bacillati</taxon>
        <taxon>Bacillota</taxon>
        <taxon>Bacilli</taxon>
        <taxon>Lactobacillales</taxon>
        <taxon>Streptococcaceae</taxon>
        <taxon>Streptococcus</taxon>
    </lineage>
</organism>
<dbReference type="EMBL" id="CP000261">
    <property type="protein sequence ID" value="ABF36624.1"/>
    <property type="molecule type" value="Genomic_DNA"/>
</dbReference>
<dbReference type="SMR" id="Q1JA37"/>
<dbReference type="KEGG" id="spj:MGAS2096_Spy1572"/>
<dbReference type="HOGENOM" id="CLU_074944_3_0_9"/>
<dbReference type="UniPathway" id="UPA00345"/>
<dbReference type="GO" id="GO:0005737">
    <property type="term" value="C:cytoplasm"/>
    <property type="evidence" value="ECO:0007669"/>
    <property type="project" value="UniProtKB-SubCell"/>
</dbReference>
<dbReference type="GO" id="GO:0003746">
    <property type="term" value="F:translation elongation factor activity"/>
    <property type="evidence" value="ECO:0007669"/>
    <property type="project" value="UniProtKB-UniRule"/>
</dbReference>
<dbReference type="GO" id="GO:0043043">
    <property type="term" value="P:peptide biosynthetic process"/>
    <property type="evidence" value="ECO:0007669"/>
    <property type="project" value="InterPro"/>
</dbReference>
<dbReference type="CDD" id="cd04470">
    <property type="entry name" value="S1_EF-P_repeat_1"/>
    <property type="match status" value="1"/>
</dbReference>
<dbReference type="CDD" id="cd05794">
    <property type="entry name" value="S1_EF-P_repeat_2"/>
    <property type="match status" value="1"/>
</dbReference>
<dbReference type="FunFam" id="2.30.30.30:FF:000003">
    <property type="entry name" value="Elongation factor P"/>
    <property type="match status" value="1"/>
</dbReference>
<dbReference type="FunFam" id="2.40.50.140:FF:000004">
    <property type="entry name" value="Elongation factor P"/>
    <property type="match status" value="1"/>
</dbReference>
<dbReference type="FunFam" id="2.40.50.140:FF:000009">
    <property type="entry name" value="Elongation factor P"/>
    <property type="match status" value="1"/>
</dbReference>
<dbReference type="Gene3D" id="2.30.30.30">
    <property type="match status" value="1"/>
</dbReference>
<dbReference type="Gene3D" id="2.40.50.140">
    <property type="entry name" value="Nucleic acid-binding proteins"/>
    <property type="match status" value="2"/>
</dbReference>
<dbReference type="HAMAP" id="MF_00141">
    <property type="entry name" value="EF_P"/>
    <property type="match status" value="1"/>
</dbReference>
<dbReference type="InterPro" id="IPR015365">
    <property type="entry name" value="Elong-fact-P_C"/>
</dbReference>
<dbReference type="InterPro" id="IPR012340">
    <property type="entry name" value="NA-bd_OB-fold"/>
</dbReference>
<dbReference type="InterPro" id="IPR014722">
    <property type="entry name" value="Rib_uL2_dom2"/>
</dbReference>
<dbReference type="InterPro" id="IPR020599">
    <property type="entry name" value="Transl_elong_fac_P/YeiP"/>
</dbReference>
<dbReference type="InterPro" id="IPR013185">
    <property type="entry name" value="Transl_elong_KOW-like"/>
</dbReference>
<dbReference type="InterPro" id="IPR001059">
    <property type="entry name" value="Transl_elong_P/YeiP_cen"/>
</dbReference>
<dbReference type="InterPro" id="IPR013852">
    <property type="entry name" value="Transl_elong_P/YeiP_CS"/>
</dbReference>
<dbReference type="InterPro" id="IPR011768">
    <property type="entry name" value="Transl_elongation_fac_P"/>
</dbReference>
<dbReference type="InterPro" id="IPR008991">
    <property type="entry name" value="Translation_prot_SH3-like_sf"/>
</dbReference>
<dbReference type="NCBIfam" id="TIGR00038">
    <property type="entry name" value="efp"/>
    <property type="match status" value="1"/>
</dbReference>
<dbReference type="NCBIfam" id="NF001810">
    <property type="entry name" value="PRK00529.1"/>
    <property type="match status" value="1"/>
</dbReference>
<dbReference type="PANTHER" id="PTHR30053">
    <property type="entry name" value="ELONGATION FACTOR P"/>
    <property type="match status" value="1"/>
</dbReference>
<dbReference type="PANTHER" id="PTHR30053:SF12">
    <property type="entry name" value="ELONGATION FACTOR P (EF-P) FAMILY PROTEIN"/>
    <property type="match status" value="1"/>
</dbReference>
<dbReference type="Pfam" id="PF01132">
    <property type="entry name" value="EFP"/>
    <property type="match status" value="1"/>
</dbReference>
<dbReference type="Pfam" id="PF08207">
    <property type="entry name" value="EFP_N"/>
    <property type="match status" value="1"/>
</dbReference>
<dbReference type="Pfam" id="PF09285">
    <property type="entry name" value="Elong-fact-P_C"/>
    <property type="match status" value="1"/>
</dbReference>
<dbReference type="PIRSF" id="PIRSF005901">
    <property type="entry name" value="EF-P"/>
    <property type="match status" value="1"/>
</dbReference>
<dbReference type="SMART" id="SM01185">
    <property type="entry name" value="EFP"/>
    <property type="match status" value="1"/>
</dbReference>
<dbReference type="SMART" id="SM00841">
    <property type="entry name" value="Elong-fact-P_C"/>
    <property type="match status" value="1"/>
</dbReference>
<dbReference type="SUPFAM" id="SSF50249">
    <property type="entry name" value="Nucleic acid-binding proteins"/>
    <property type="match status" value="2"/>
</dbReference>
<dbReference type="SUPFAM" id="SSF50104">
    <property type="entry name" value="Translation proteins SH3-like domain"/>
    <property type="match status" value="1"/>
</dbReference>
<dbReference type="PROSITE" id="PS01275">
    <property type="entry name" value="EFP"/>
    <property type="match status" value="1"/>
</dbReference>
<proteinExistence type="inferred from homology"/>
<feature type="chain" id="PRO_1000010872" description="Elongation factor P">
    <location>
        <begin position="1"/>
        <end position="185"/>
    </location>
</feature>
<evidence type="ECO:0000255" key="1">
    <source>
        <dbReference type="HAMAP-Rule" id="MF_00141"/>
    </source>
</evidence>
<keyword id="KW-0963">Cytoplasm</keyword>
<keyword id="KW-0251">Elongation factor</keyword>
<keyword id="KW-0648">Protein biosynthesis</keyword>
<gene>
    <name evidence="1" type="primary">efp</name>
    <name type="ordered locus">MGAS2096_Spy1572</name>
</gene>